<name>SYP_VIBVY</name>
<proteinExistence type="inferred from homology"/>
<sequence length="571" mass="63163">MRTSKYLLSTLKETPNDAEVVSHQLMLRAGMIRKLASGLYTWLPTGLRVLRKVENIVRQEIDNAGAIETLMPVVQPFELWEETGRSEKMGPELLRFTDRHVRPFVLSPTAEEVITALVRNEVSSYKQLPINLYQIQTKFRDERRPRFGVMRAREFCMMDAYSFDIDKAGLEKSYQAMHDAYCKAFDRMGLEYRPVLADSGAIGGNGSQEFHVLAESGEDLIAFSTESDYAANIEKAEAVAPAVERAAPTQEMTLVDTPNAKTIAELVEQHGISIEKTVKTLFVKASDAIEAPIVALIIRGDHELNEIKAENLAEVATPLEMATEEEMRELIGAGAGSLGPVGLKLPFIVDRSVAVMSDFGAGANIDGKHYFGINWGRDVELGQVADLRNVVEGDPSPCGKGTLMLKRGIEVGHIFQLGNVYSEAMNCGVLDSNGKNVILEMGCYGIGVSRVVAAAIEQNNDKYGIIWPDALAPFQVAIVPMNMHKSERVQEAAEKLYAELTAMGIEVLFDDRKERPGVMFSDMELIGIPHTIVIGDRSMDEGHFEYKNRRSGEKTPVAMADIVEYIKAQLE</sequence>
<keyword id="KW-0030">Aminoacyl-tRNA synthetase</keyword>
<keyword id="KW-0067">ATP-binding</keyword>
<keyword id="KW-0963">Cytoplasm</keyword>
<keyword id="KW-0436">Ligase</keyword>
<keyword id="KW-0547">Nucleotide-binding</keyword>
<keyword id="KW-0648">Protein biosynthesis</keyword>
<gene>
    <name evidence="1" type="primary">proS</name>
    <name type="ordered locus">VV2572</name>
</gene>
<dbReference type="EC" id="6.1.1.15" evidence="1"/>
<dbReference type="EMBL" id="BA000037">
    <property type="protein sequence ID" value="BAC95336.1"/>
    <property type="molecule type" value="Genomic_DNA"/>
</dbReference>
<dbReference type="RefSeq" id="WP_011150974.1">
    <property type="nucleotide sequence ID" value="NC_005139.1"/>
</dbReference>
<dbReference type="SMR" id="Q7MIE5"/>
<dbReference type="STRING" id="672.VV93_v1c22900"/>
<dbReference type="KEGG" id="vvy:VV2572"/>
<dbReference type="PATRIC" id="fig|196600.6.peg.2577"/>
<dbReference type="eggNOG" id="COG0442">
    <property type="taxonomic scope" value="Bacteria"/>
</dbReference>
<dbReference type="HOGENOM" id="CLU_016739_0_0_6"/>
<dbReference type="Proteomes" id="UP000002675">
    <property type="component" value="Chromosome I"/>
</dbReference>
<dbReference type="GO" id="GO:0005829">
    <property type="term" value="C:cytosol"/>
    <property type="evidence" value="ECO:0007669"/>
    <property type="project" value="TreeGrafter"/>
</dbReference>
<dbReference type="GO" id="GO:0002161">
    <property type="term" value="F:aminoacyl-tRNA deacylase activity"/>
    <property type="evidence" value="ECO:0007669"/>
    <property type="project" value="InterPro"/>
</dbReference>
<dbReference type="GO" id="GO:0005524">
    <property type="term" value="F:ATP binding"/>
    <property type="evidence" value="ECO:0007669"/>
    <property type="project" value="UniProtKB-UniRule"/>
</dbReference>
<dbReference type="GO" id="GO:0004827">
    <property type="term" value="F:proline-tRNA ligase activity"/>
    <property type="evidence" value="ECO:0007669"/>
    <property type="project" value="UniProtKB-UniRule"/>
</dbReference>
<dbReference type="GO" id="GO:0006433">
    <property type="term" value="P:prolyl-tRNA aminoacylation"/>
    <property type="evidence" value="ECO:0007669"/>
    <property type="project" value="UniProtKB-UniRule"/>
</dbReference>
<dbReference type="CDD" id="cd04334">
    <property type="entry name" value="ProRS-INS"/>
    <property type="match status" value="1"/>
</dbReference>
<dbReference type="CDD" id="cd00861">
    <property type="entry name" value="ProRS_anticodon_short"/>
    <property type="match status" value="1"/>
</dbReference>
<dbReference type="CDD" id="cd00779">
    <property type="entry name" value="ProRS_core_prok"/>
    <property type="match status" value="1"/>
</dbReference>
<dbReference type="FunFam" id="3.30.930.10:FF:000043">
    <property type="entry name" value="Proline--tRNA ligase"/>
    <property type="match status" value="1"/>
</dbReference>
<dbReference type="FunFam" id="3.40.50.800:FF:000006">
    <property type="entry name" value="Proline--tRNA ligase"/>
    <property type="match status" value="1"/>
</dbReference>
<dbReference type="FunFam" id="3.90.960.10:FF:000001">
    <property type="entry name" value="Proline--tRNA ligase"/>
    <property type="match status" value="1"/>
</dbReference>
<dbReference type="Gene3D" id="3.40.50.800">
    <property type="entry name" value="Anticodon-binding domain"/>
    <property type="match status" value="1"/>
</dbReference>
<dbReference type="Gene3D" id="3.30.930.10">
    <property type="entry name" value="Bira Bifunctional Protein, Domain 2"/>
    <property type="match status" value="2"/>
</dbReference>
<dbReference type="Gene3D" id="3.90.960.10">
    <property type="entry name" value="YbaK/aminoacyl-tRNA synthetase-associated domain"/>
    <property type="match status" value="1"/>
</dbReference>
<dbReference type="HAMAP" id="MF_01569">
    <property type="entry name" value="Pro_tRNA_synth_type1"/>
    <property type="match status" value="1"/>
</dbReference>
<dbReference type="InterPro" id="IPR002314">
    <property type="entry name" value="aa-tRNA-synt_IIb"/>
</dbReference>
<dbReference type="InterPro" id="IPR006195">
    <property type="entry name" value="aa-tRNA-synth_II"/>
</dbReference>
<dbReference type="InterPro" id="IPR045864">
    <property type="entry name" value="aa-tRNA-synth_II/BPL/LPL"/>
</dbReference>
<dbReference type="InterPro" id="IPR004154">
    <property type="entry name" value="Anticodon-bd"/>
</dbReference>
<dbReference type="InterPro" id="IPR036621">
    <property type="entry name" value="Anticodon-bd_dom_sf"/>
</dbReference>
<dbReference type="InterPro" id="IPR002316">
    <property type="entry name" value="Pro-tRNA-ligase_IIa"/>
</dbReference>
<dbReference type="InterPro" id="IPR004500">
    <property type="entry name" value="Pro-tRNA-synth_IIa_bac-type"/>
</dbReference>
<dbReference type="InterPro" id="IPR023717">
    <property type="entry name" value="Pro-tRNA-Synthase_IIa_type1"/>
</dbReference>
<dbReference type="InterPro" id="IPR050062">
    <property type="entry name" value="Pro-tRNA_synthetase"/>
</dbReference>
<dbReference type="InterPro" id="IPR044140">
    <property type="entry name" value="ProRS_anticodon_short"/>
</dbReference>
<dbReference type="InterPro" id="IPR033730">
    <property type="entry name" value="ProRS_core_prok"/>
</dbReference>
<dbReference type="InterPro" id="IPR036754">
    <property type="entry name" value="YbaK/aa-tRNA-synt-asso_dom_sf"/>
</dbReference>
<dbReference type="InterPro" id="IPR007214">
    <property type="entry name" value="YbaK/aa-tRNA-synth-assoc-dom"/>
</dbReference>
<dbReference type="NCBIfam" id="NF006625">
    <property type="entry name" value="PRK09194.1"/>
    <property type="match status" value="1"/>
</dbReference>
<dbReference type="NCBIfam" id="TIGR00409">
    <property type="entry name" value="proS_fam_II"/>
    <property type="match status" value="1"/>
</dbReference>
<dbReference type="PANTHER" id="PTHR42753">
    <property type="entry name" value="MITOCHONDRIAL RIBOSOME PROTEIN L39/PROLYL-TRNA LIGASE FAMILY MEMBER"/>
    <property type="match status" value="1"/>
</dbReference>
<dbReference type="PANTHER" id="PTHR42753:SF2">
    <property type="entry name" value="PROLINE--TRNA LIGASE"/>
    <property type="match status" value="1"/>
</dbReference>
<dbReference type="Pfam" id="PF03129">
    <property type="entry name" value="HGTP_anticodon"/>
    <property type="match status" value="1"/>
</dbReference>
<dbReference type="Pfam" id="PF00587">
    <property type="entry name" value="tRNA-synt_2b"/>
    <property type="match status" value="1"/>
</dbReference>
<dbReference type="Pfam" id="PF04073">
    <property type="entry name" value="tRNA_edit"/>
    <property type="match status" value="1"/>
</dbReference>
<dbReference type="PIRSF" id="PIRSF001535">
    <property type="entry name" value="ProRS_1"/>
    <property type="match status" value="1"/>
</dbReference>
<dbReference type="PRINTS" id="PR01046">
    <property type="entry name" value="TRNASYNTHPRO"/>
</dbReference>
<dbReference type="SUPFAM" id="SSF52954">
    <property type="entry name" value="Class II aaRS ABD-related"/>
    <property type="match status" value="1"/>
</dbReference>
<dbReference type="SUPFAM" id="SSF55681">
    <property type="entry name" value="Class II aaRS and biotin synthetases"/>
    <property type="match status" value="1"/>
</dbReference>
<dbReference type="SUPFAM" id="SSF55826">
    <property type="entry name" value="YbaK/ProRS associated domain"/>
    <property type="match status" value="1"/>
</dbReference>
<dbReference type="PROSITE" id="PS50862">
    <property type="entry name" value="AA_TRNA_LIGASE_II"/>
    <property type="match status" value="1"/>
</dbReference>
<accession>Q7MIE5</accession>
<reference key="1">
    <citation type="journal article" date="2003" name="Genome Res.">
        <title>Comparative genome analysis of Vibrio vulnificus, a marine pathogen.</title>
        <authorList>
            <person name="Chen C.-Y."/>
            <person name="Wu K.-M."/>
            <person name="Chang Y.-C."/>
            <person name="Chang C.-H."/>
            <person name="Tsai H.-C."/>
            <person name="Liao T.-L."/>
            <person name="Liu Y.-M."/>
            <person name="Chen H.-J."/>
            <person name="Shen A.B.-T."/>
            <person name="Li J.-C."/>
            <person name="Su T.-L."/>
            <person name="Shao C.-P."/>
            <person name="Lee C.-T."/>
            <person name="Hor L.-I."/>
            <person name="Tsai S.-F."/>
        </authorList>
    </citation>
    <scope>NUCLEOTIDE SEQUENCE [LARGE SCALE GENOMIC DNA]</scope>
    <source>
        <strain>YJ016</strain>
    </source>
</reference>
<evidence type="ECO:0000255" key="1">
    <source>
        <dbReference type="HAMAP-Rule" id="MF_01569"/>
    </source>
</evidence>
<comment type="function">
    <text evidence="1">Catalyzes the attachment of proline to tRNA(Pro) in a two-step reaction: proline is first activated by ATP to form Pro-AMP and then transferred to the acceptor end of tRNA(Pro). As ProRS can inadvertently accommodate and process non-cognate amino acids such as alanine and cysteine, to avoid such errors it has two additional distinct editing activities against alanine. One activity is designated as 'pretransfer' editing and involves the tRNA(Pro)-independent hydrolysis of activated Ala-AMP. The other activity is designated 'posttransfer' editing and involves deacylation of mischarged Ala-tRNA(Pro). The misacylated Cys-tRNA(Pro) is not edited by ProRS.</text>
</comment>
<comment type="catalytic activity">
    <reaction evidence="1">
        <text>tRNA(Pro) + L-proline + ATP = L-prolyl-tRNA(Pro) + AMP + diphosphate</text>
        <dbReference type="Rhea" id="RHEA:14305"/>
        <dbReference type="Rhea" id="RHEA-COMP:9700"/>
        <dbReference type="Rhea" id="RHEA-COMP:9702"/>
        <dbReference type="ChEBI" id="CHEBI:30616"/>
        <dbReference type="ChEBI" id="CHEBI:33019"/>
        <dbReference type="ChEBI" id="CHEBI:60039"/>
        <dbReference type="ChEBI" id="CHEBI:78442"/>
        <dbReference type="ChEBI" id="CHEBI:78532"/>
        <dbReference type="ChEBI" id="CHEBI:456215"/>
        <dbReference type="EC" id="6.1.1.15"/>
    </reaction>
</comment>
<comment type="subunit">
    <text evidence="1">Homodimer.</text>
</comment>
<comment type="subcellular location">
    <subcellularLocation>
        <location evidence="1">Cytoplasm</location>
    </subcellularLocation>
</comment>
<comment type="domain">
    <text evidence="1">Consists of three domains: the N-terminal catalytic domain, the editing domain and the C-terminal anticodon-binding domain.</text>
</comment>
<comment type="similarity">
    <text evidence="1">Belongs to the class-II aminoacyl-tRNA synthetase family. ProS type 1 subfamily.</text>
</comment>
<feature type="chain" id="PRO_0000248812" description="Proline--tRNA ligase">
    <location>
        <begin position="1"/>
        <end position="571"/>
    </location>
</feature>
<protein>
    <recommendedName>
        <fullName evidence="1">Proline--tRNA ligase</fullName>
        <ecNumber evidence="1">6.1.1.15</ecNumber>
    </recommendedName>
    <alternativeName>
        <fullName evidence="1">Prolyl-tRNA synthetase</fullName>
        <shortName evidence="1">ProRS</shortName>
    </alternativeName>
</protein>
<organism>
    <name type="scientific">Vibrio vulnificus (strain YJ016)</name>
    <dbReference type="NCBI Taxonomy" id="196600"/>
    <lineage>
        <taxon>Bacteria</taxon>
        <taxon>Pseudomonadati</taxon>
        <taxon>Pseudomonadota</taxon>
        <taxon>Gammaproteobacteria</taxon>
        <taxon>Vibrionales</taxon>
        <taxon>Vibrionaceae</taxon>
        <taxon>Vibrio</taxon>
    </lineage>
</organism>